<protein>
    <recommendedName>
        <fullName evidence="7">20-oxo-5-O-mycaminosyltylactone 23-monooxygenase</fullName>
        <ecNumber evidence="7">1.14.15.34</ecNumber>
    </recommendedName>
    <alternativeName>
        <fullName evidence="4">Cytochrome P-450 monooxygenase TylH1</fullName>
    </alternativeName>
</protein>
<accession>Q9ZHQ1</accession>
<accession>Q9S4D6</accession>
<dbReference type="EC" id="1.14.15.34" evidence="7"/>
<dbReference type="EMBL" id="AF147703">
    <property type="protein sequence ID" value="AAD41818.1"/>
    <property type="status" value="ALT_INIT"/>
    <property type="molecule type" value="Genomic_DNA"/>
</dbReference>
<dbReference type="EMBL" id="AF055922">
    <property type="protein sequence ID" value="AAD12167.1"/>
    <property type="molecule type" value="Genomic_DNA"/>
</dbReference>
<dbReference type="PDB" id="6B11">
    <property type="method" value="X-ray"/>
    <property type="resolution" value="1.99 A"/>
    <property type="chains" value="A/B=1-420"/>
</dbReference>
<dbReference type="PDBsum" id="6B11"/>
<dbReference type="SMR" id="Q9ZHQ1"/>
<dbReference type="STRING" id="1906.SFRA_26455"/>
<dbReference type="KEGG" id="ag:AAD12167"/>
<dbReference type="eggNOG" id="COG2124">
    <property type="taxonomic scope" value="Bacteria"/>
</dbReference>
<dbReference type="BioCyc" id="MetaCyc:MONOMER-18389"/>
<dbReference type="BRENDA" id="1.14.15.34">
    <property type="organism ID" value="5932"/>
</dbReference>
<dbReference type="UniPathway" id="UPA01018"/>
<dbReference type="GO" id="GO:0020037">
    <property type="term" value="F:heme binding"/>
    <property type="evidence" value="ECO:0007669"/>
    <property type="project" value="InterPro"/>
</dbReference>
<dbReference type="GO" id="GO:0005506">
    <property type="term" value="F:iron ion binding"/>
    <property type="evidence" value="ECO:0007669"/>
    <property type="project" value="InterPro"/>
</dbReference>
<dbReference type="GO" id="GO:0004497">
    <property type="term" value="F:monooxygenase activity"/>
    <property type="evidence" value="ECO:0007669"/>
    <property type="project" value="UniProtKB-KW"/>
</dbReference>
<dbReference type="GO" id="GO:0016705">
    <property type="term" value="F:oxidoreductase activity, acting on paired donors, with incorporation or reduction of molecular oxygen"/>
    <property type="evidence" value="ECO:0007669"/>
    <property type="project" value="InterPro"/>
</dbReference>
<dbReference type="GO" id="GO:0017000">
    <property type="term" value="P:antibiotic biosynthetic process"/>
    <property type="evidence" value="ECO:0007669"/>
    <property type="project" value="UniProtKB-KW"/>
</dbReference>
<dbReference type="GO" id="GO:0016999">
    <property type="term" value="P:antibiotic metabolic process"/>
    <property type="evidence" value="ECO:0000315"/>
    <property type="project" value="UniProtKB"/>
</dbReference>
<dbReference type="CDD" id="cd11030">
    <property type="entry name" value="CYP105-like"/>
    <property type="match status" value="1"/>
</dbReference>
<dbReference type="FunFam" id="1.10.630.10:FF:000018">
    <property type="entry name" value="Cytochrome P450 monooxygenase"/>
    <property type="match status" value="1"/>
</dbReference>
<dbReference type="Gene3D" id="1.10.630.10">
    <property type="entry name" value="Cytochrome P450"/>
    <property type="match status" value="1"/>
</dbReference>
<dbReference type="InterPro" id="IPR001128">
    <property type="entry name" value="Cyt_P450"/>
</dbReference>
<dbReference type="InterPro" id="IPR002397">
    <property type="entry name" value="Cyt_P450_B"/>
</dbReference>
<dbReference type="InterPro" id="IPR017972">
    <property type="entry name" value="Cyt_P450_CS"/>
</dbReference>
<dbReference type="InterPro" id="IPR036396">
    <property type="entry name" value="Cyt_P450_sf"/>
</dbReference>
<dbReference type="PANTHER" id="PTHR46696:SF1">
    <property type="entry name" value="CYTOCHROME P450 YJIB-RELATED"/>
    <property type="match status" value="1"/>
</dbReference>
<dbReference type="PANTHER" id="PTHR46696">
    <property type="entry name" value="P450, PUTATIVE (EUROFUNG)-RELATED"/>
    <property type="match status" value="1"/>
</dbReference>
<dbReference type="Pfam" id="PF00067">
    <property type="entry name" value="p450"/>
    <property type="match status" value="1"/>
</dbReference>
<dbReference type="PRINTS" id="PR00359">
    <property type="entry name" value="BP450"/>
</dbReference>
<dbReference type="PRINTS" id="PR00385">
    <property type="entry name" value="P450"/>
</dbReference>
<dbReference type="SUPFAM" id="SSF48264">
    <property type="entry name" value="Cytochrome P450"/>
    <property type="match status" value="1"/>
</dbReference>
<dbReference type="PROSITE" id="PS00086">
    <property type="entry name" value="CYTOCHROME_P450"/>
    <property type="match status" value="1"/>
</dbReference>
<proteinExistence type="evidence at protein level"/>
<feature type="chain" id="PRO_0000431559" description="20-oxo-5-O-mycaminosyltylactone 23-monooxygenase">
    <location>
        <begin position="1"/>
        <end position="420"/>
    </location>
</feature>
<feature type="region of interest" description="Disordered" evidence="2">
    <location>
        <begin position="1"/>
        <end position="28"/>
    </location>
</feature>
<feature type="binding site" evidence="1">
    <location>
        <position position="118"/>
    </location>
    <ligand>
        <name>heme</name>
        <dbReference type="ChEBI" id="CHEBI:30413"/>
    </ligand>
</feature>
<feature type="binding site" evidence="1">
    <location>
        <position position="122"/>
    </location>
    <ligand>
        <name>heme</name>
        <dbReference type="ChEBI" id="CHEBI:30413"/>
    </ligand>
</feature>
<feature type="binding site" evidence="1">
    <location>
        <position position="311"/>
    </location>
    <ligand>
        <name>heme</name>
        <dbReference type="ChEBI" id="CHEBI:30413"/>
    </ligand>
</feature>
<feature type="binding site" evidence="1">
    <location>
        <position position="367"/>
    </location>
    <ligand>
        <name>heme</name>
        <dbReference type="ChEBI" id="CHEBI:30413"/>
    </ligand>
</feature>
<feature type="binding site" description="axial binding residue" evidence="1">
    <location>
        <position position="369"/>
    </location>
    <ligand>
        <name>heme</name>
        <dbReference type="ChEBI" id="CHEBI:30413"/>
    </ligand>
    <ligandPart>
        <name>Fe</name>
        <dbReference type="ChEBI" id="CHEBI:18248"/>
    </ligandPart>
</feature>
<feature type="sequence conflict" description="In Ref. 2; AAD12167." evidence="6" ref="2">
    <original>EL</original>
    <variation>DV</variation>
    <location>
        <begin position="136"/>
        <end position="137"/>
    </location>
</feature>
<feature type="strand" evidence="9">
    <location>
        <begin position="33"/>
        <end position="36"/>
    </location>
</feature>
<feature type="helix" evidence="9">
    <location>
        <begin position="48"/>
        <end position="55"/>
    </location>
</feature>
<feature type="strand" evidence="9">
    <location>
        <begin position="57"/>
        <end position="62"/>
    </location>
</feature>
<feature type="strand" evidence="9">
    <location>
        <begin position="68"/>
        <end position="72"/>
    </location>
</feature>
<feature type="helix" evidence="9">
    <location>
        <begin position="75"/>
        <end position="82"/>
    </location>
</feature>
<feature type="helix" evidence="9">
    <location>
        <begin position="91"/>
        <end position="93"/>
    </location>
</feature>
<feature type="turn" evidence="9">
    <location>
        <begin position="99"/>
        <end position="104"/>
    </location>
</feature>
<feature type="strand" evidence="9">
    <location>
        <begin position="107"/>
        <end position="109"/>
    </location>
</feature>
<feature type="helix" evidence="9">
    <location>
        <begin position="110"/>
        <end position="112"/>
    </location>
</feature>
<feature type="helix" evidence="9">
    <location>
        <begin position="117"/>
        <end position="125"/>
    </location>
</feature>
<feature type="helix" evidence="9">
    <location>
        <begin position="126"/>
        <end position="128"/>
    </location>
</feature>
<feature type="helix" evidence="9">
    <location>
        <begin position="131"/>
        <end position="155"/>
    </location>
</feature>
<feature type="strand" evidence="9">
    <location>
        <begin position="157"/>
        <end position="160"/>
    </location>
</feature>
<feature type="helix" evidence="9">
    <location>
        <begin position="161"/>
        <end position="164"/>
    </location>
</feature>
<feature type="helix" evidence="9">
    <location>
        <begin position="166"/>
        <end position="178"/>
    </location>
</feature>
<feature type="helix" evidence="9">
    <location>
        <begin position="182"/>
        <end position="184"/>
    </location>
</feature>
<feature type="helix" evidence="9">
    <location>
        <begin position="185"/>
        <end position="195"/>
    </location>
</feature>
<feature type="helix" evidence="9">
    <location>
        <begin position="202"/>
        <end position="222"/>
    </location>
</feature>
<feature type="helix" evidence="9">
    <location>
        <begin position="230"/>
        <end position="240"/>
    </location>
</feature>
<feature type="helix" evidence="9">
    <location>
        <begin position="246"/>
        <end position="275"/>
    </location>
</feature>
<feature type="helix" evidence="9">
    <location>
        <begin position="279"/>
        <end position="287"/>
    </location>
</feature>
<feature type="helix" evidence="9">
    <location>
        <begin position="289"/>
        <end position="291"/>
    </location>
</feature>
<feature type="helix" evidence="9">
    <location>
        <begin position="292"/>
        <end position="303"/>
    </location>
</feature>
<feature type="strand" evidence="9">
    <location>
        <begin position="309"/>
        <end position="315"/>
    </location>
</feature>
<feature type="strand" evidence="9">
    <location>
        <begin position="317"/>
        <end position="319"/>
    </location>
</feature>
<feature type="strand" evidence="9">
    <location>
        <begin position="322"/>
        <end position="324"/>
    </location>
</feature>
<feature type="strand" evidence="9">
    <location>
        <begin position="329"/>
        <end position="332"/>
    </location>
</feature>
<feature type="helix" evidence="9">
    <location>
        <begin position="334"/>
        <end position="337"/>
    </location>
</feature>
<feature type="turn" evidence="9">
    <location>
        <begin position="341"/>
        <end position="343"/>
    </location>
</feature>
<feature type="strand" evidence="9">
    <location>
        <begin position="344"/>
        <end position="346"/>
    </location>
</feature>
<feature type="helix" evidence="9">
    <location>
        <begin position="372"/>
        <end position="389"/>
    </location>
</feature>
<feature type="strand" evidence="9">
    <location>
        <begin position="408"/>
        <end position="410"/>
    </location>
</feature>
<feature type="strand" evidence="9">
    <location>
        <begin position="417"/>
        <end position="419"/>
    </location>
</feature>
<name>TYLH1_STRFR</name>
<comment type="function">
    <text evidence="3">Involved in the biosynthesis of the complex macrolide antibiotic tylosin. Catalyzes the hydroxylation of 20-oxo-5-O-beta-mycaminosyltylactone at the C-23 position to yield 5-O-beta-mycaminosyltylonolide.</text>
</comment>
<comment type="catalytic activity">
    <reaction evidence="7">
        <text>20-oxo-5-O-beta-D-mycaminosyltylonolide + 2 reduced [2Fe-2S]-[ferredoxin] + O2 + 2 H(+) = 5-O-beta-D-mycaminosyltylonolide + 2 oxidized [2Fe-2S]-[ferredoxin] + H2O</text>
        <dbReference type="Rhea" id="RHEA:24524"/>
        <dbReference type="Rhea" id="RHEA-COMP:10000"/>
        <dbReference type="Rhea" id="RHEA-COMP:10001"/>
        <dbReference type="ChEBI" id="CHEBI:15377"/>
        <dbReference type="ChEBI" id="CHEBI:15378"/>
        <dbReference type="ChEBI" id="CHEBI:15379"/>
        <dbReference type="ChEBI" id="CHEBI:33737"/>
        <dbReference type="ChEBI" id="CHEBI:33738"/>
        <dbReference type="ChEBI" id="CHEBI:76803"/>
        <dbReference type="ChEBI" id="CHEBI:76804"/>
        <dbReference type="EC" id="1.14.15.34"/>
    </reaction>
</comment>
<comment type="pathway">
    <text evidence="3">Antibiotic biosynthesis; tylosin biosynthesis.</text>
</comment>
<comment type="disruption phenotype">
    <text evidence="3">Cells lacking this gene are blocked in the monooxygenation of tylactone at position C-23 and accumulate 20-oxo-5-O-beta-mycaminosyltylactone.</text>
</comment>
<comment type="similarity">
    <text evidence="6">Belongs to the cytochrome P450 family.</text>
</comment>
<comment type="sequence caution" evidence="6">
    <conflict type="erroneous initiation">
        <sequence resource="EMBL-CDS" id="AAD41818"/>
    </conflict>
    <text>Extended N-terminus.</text>
</comment>
<sequence length="420" mass="45560">MSSSGDARPSQKGILLPAARANDTDEAAGRRSIAWPVARTCPFSPPEQYAALRAEEPIARAELWDGAPVWLISRQDHVRALLADPRVSIHPAKLPRLSPSDGEAEASRSLLTLDPPDHGALRGHFIPEFGLRRVRELRPSVEQIVTGLLDDLTARGDEADLLADFALPMATQVICRLLDIPYEDRDYFQERTEQATRPAAGEEALEALLELRDYLDRLISGKTGRESGDGMLGSMVAQARGGGLSHADVLDNAVLLLAAGHETTASMVTMSVLVLLQHPTAWRELTVNPGLLPGAVDELLRYLSIADGLRRSATADIEIDGHTIRAGDGLVFLLAAANRDEAVFSEPEAFDIHRSARRHVAFGYGPHQCLGQNLARMELEVALGAVLERLPALRPTTDVAGLRLKSDSAVFGVYELPVAW</sequence>
<gene>
    <name evidence="4" type="primary">tylH1</name>
    <name evidence="5 8" type="synonym">tylHI</name>
</gene>
<keyword id="KW-0002">3D-structure</keyword>
<keyword id="KW-0045">Antibiotic biosynthesis</keyword>
<keyword id="KW-0349">Heme</keyword>
<keyword id="KW-0408">Iron</keyword>
<keyword id="KW-0479">Metal-binding</keyword>
<keyword id="KW-0503">Monooxygenase</keyword>
<keyword id="KW-0560">Oxidoreductase</keyword>
<evidence type="ECO:0000250" key="1">
    <source>
        <dbReference type="UniProtKB" id="P18326"/>
    </source>
</evidence>
<evidence type="ECO:0000256" key="2">
    <source>
        <dbReference type="SAM" id="MobiDB-lite"/>
    </source>
</evidence>
<evidence type="ECO:0000269" key="3">
    <source>
    </source>
</evidence>
<evidence type="ECO:0000303" key="4">
    <source>
    </source>
</evidence>
<evidence type="ECO:0000303" key="5">
    <source>
    </source>
</evidence>
<evidence type="ECO:0000305" key="6"/>
<evidence type="ECO:0000305" key="7">
    <source>
    </source>
</evidence>
<evidence type="ECO:0000312" key="8">
    <source>
        <dbReference type="EMBL" id="AAD41818.1"/>
    </source>
</evidence>
<evidence type="ECO:0007829" key="9">
    <source>
        <dbReference type="PDB" id="6B11"/>
    </source>
</evidence>
<organism>
    <name type="scientific">Streptomyces fradiae</name>
    <name type="common">Streptomyces roseoflavus</name>
    <dbReference type="NCBI Taxonomy" id="1906"/>
    <lineage>
        <taxon>Bacteria</taxon>
        <taxon>Bacillati</taxon>
        <taxon>Actinomycetota</taxon>
        <taxon>Actinomycetes</taxon>
        <taxon>Kitasatosporales</taxon>
        <taxon>Streptomycetaceae</taxon>
        <taxon>Streptomyces</taxon>
    </lineage>
</organism>
<reference key="1">
    <citation type="journal article" date="1999" name="J. Ind. Microbiol. Biotechnol.">
        <title>The mycinose-biosynthetic genes of Streptomyces fradiae, producer of tylosin.</title>
        <authorList>
            <person name="Bate N."/>
            <person name="Cundliffe E."/>
        </authorList>
    </citation>
    <scope>NUCLEOTIDE SEQUENCE [GENOMIC DNA]</scope>
    <source>
        <strain>T59235</strain>
    </source>
</reference>
<reference key="2">
    <citation type="journal article" date="1999" name="Microbiology">
        <title>The tylosin biosynthetic cluster from Streptomyces fradiae: genetic organization of the left region.</title>
        <authorList>
            <person name="Fouces R."/>
            <person name="Mellado E."/>
            <person name="Diez B."/>
            <person name="Barredo J.L."/>
        </authorList>
    </citation>
    <scope>NUCLEOTIDE SEQUENCE [GENOMIC DNA]</scope>
    <source>
        <strain>ATCC 19609</strain>
    </source>
</reference>
<reference key="3">
    <citation type="journal article" date="1981" name="Antimicrob. Agents Chemother.">
        <title>Properties of Streptomyces fradiae mutants blocked in biosynthesis of the macrolide antibiotic tylosin.</title>
        <authorList>
            <person name="Baltz R.H."/>
            <person name="Seno E.T."/>
        </authorList>
    </citation>
    <scope>FUNCTION</scope>
    <scope>CATALYTIC ACTIVITY</scope>
    <scope>DISRUPTION PHENOTYPE</scope>
    <scope>PATHWAY</scope>
</reference>